<feature type="chain" id="PRO_1000084471" description="Phosphoenolpyruvate synthase regulatory protein">
    <location>
        <begin position="1"/>
        <end position="277"/>
    </location>
</feature>
<feature type="binding site" evidence="1">
    <location>
        <begin position="157"/>
        <end position="164"/>
    </location>
    <ligand>
        <name>ADP</name>
        <dbReference type="ChEBI" id="CHEBI:456216"/>
    </ligand>
</feature>
<name>PSRP_SALPB</name>
<evidence type="ECO:0000255" key="1">
    <source>
        <dbReference type="HAMAP-Rule" id="MF_01062"/>
    </source>
</evidence>
<organism>
    <name type="scientific">Salmonella paratyphi B (strain ATCC BAA-1250 / SPB7)</name>
    <dbReference type="NCBI Taxonomy" id="1016998"/>
    <lineage>
        <taxon>Bacteria</taxon>
        <taxon>Pseudomonadati</taxon>
        <taxon>Pseudomonadota</taxon>
        <taxon>Gammaproteobacteria</taxon>
        <taxon>Enterobacterales</taxon>
        <taxon>Enterobacteriaceae</taxon>
        <taxon>Salmonella</taxon>
    </lineage>
</organism>
<sequence length="277" mass="31149">MDNVVDRHVFYISDGTAITAEVLGHAVMSQFPVTISSITLPFVENESRARAVKDQIDAIYQQTGVRPLVFYSIVLPEIRAIILQSEGFCQDIVQALVAPLQQEMKLDPTPIAHRTHGLNPGNLNKYDARIAAIDYTLAHDDGISLRNLDQAQVILLGVSRCGKTPTSLYLAMQFGIRAANYPFIADDMDNLTLPTSLKPLQHKLFGLTIDPERLAAIREERRENSRYASLRQCRMEVAEVEALYRKNQIPCLNSTNYSVEEIATKILDIMGLNRRMY</sequence>
<dbReference type="EC" id="2.7.11.33" evidence="1"/>
<dbReference type="EC" id="2.7.4.28" evidence="1"/>
<dbReference type="EMBL" id="CP000886">
    <property type="protein sequence ID" value="ABX67374.1"/>
    <property type="molecule type" value="Genomic_DNA"/>
</dbReference>
<dbReference type="RefSeq" id="WP_000370992.1">
    <property type="nucleotide sequence ID" value="NC_010102.1"/>
</dbReference>
<dbReference type="SMR" id="A9N171"/>
<dbReference type="KEGG" id="spq:SPAB_01987"/>
<dbReference type="PATRIC" id="fig|1016998.12.peg.1875"/>
<dbReference type="HOGENOM" id="CLU_046206_1_0_6"/>
<dbReference type="BioCyc" id="SENT1016998:SPAB_RS08105-MONOMER"/>
<dbReference type="Proteomes" id="UP000008556">
    <property type="component" value="Chromosome"/>
</dbReference>
<dbReference type="GO" id="GO:0043531">
    <property type="term" value="F:ADP binding"/>
    <property type="evidence" value="ECO:0007669"/>
    <property type="project" value="UniProtKB-UniRule"/>
</dbReference>
<dbReference type="GO" id="GO:0005524">
    <property type="term" value="F:ATP binding"/>
    <property type="evidence" value="ECO:0007669"/>
    <property type="project" value="InterPro"/>
</dbReference>
<dbReference type="GO" id="GO:0016776">
    <property type="term" value="F:phosphotransferase activity, phosphate group as acceptor"/>
    <property type="evidence" value="ECO:0007669"/>
    <property type="project" value="UniProtKB-UniRule"/>
</dbReference>
<dbReference type="GO" id="GO:0004674">
    <property type="term" value="F:protein serine/threonine kinase activity"/>
    <property type="evidence" value="ECO:0007669"/>
    <property type="project" value="UniProtKB-UniRule"/>
</dbReference>
<dbReference type="HAMAP" id="MF_01062">
    <property type="entry name" value="PSRP"/>
    <property type="match status" value="1"/>
</dbReference>
<dbReference type="InterPro" id="IPR005177">
    <property type="entry name" value="Kinase-pyrophosphorylase"/>
</dbReference>
<dbReference type="InterPro" id="IPR026530">
    <property type="entry name" value="PSRP"/>
</dbReference>
<dbReference type="NCBIfam" id="NF003742">
    <property type="entry name" value="PRK05339.1"/>
    <property type="match status" value="1"/>
</dbReference>
<dbReference type="PANTHER" id="PTHR31756">
    <property type="entry name" value="PYRUVATE, PHOSPHATE DIKINASE REGULATORY PROTEIN 1, CHLOROPLASTIC"/>
    <property type="match status" value="1"/>
</dbReference>
<dbReference type="PANTHER" id="PTHR31756:SF3">
    <property type="entry name" value="PYRUVATE, PHOSPHATE DIKINASE REGULATORY PROTEIN 1, CHLOROPLASTIC"/>
    <property type="match status" value="1"/>
</dbReference>
<dbReference type="Pfam" id="PF03618">
    <property type="entry name" value="Kinase-PPPase"/>
    <property type="match status" value="1"/>
</dbReference>
<reference key="1">
    <citation type="submission" date="2007-11" db="EMBL/GenBank/DDBJ databases">
        <authorList>
            <consortium name="The Salmonella enterica serovar Paratyphi B Genome Sequencing Project"/>
            <person name="McClelland M."/>
            <person name="Sanderson E.K."/>
            <person name="Porwollik S."/>
            <person name="Spieth J."/>
            <person name="Clifton W.S."/>
            <person name="Fulton R."/>
            <person name="Cordes M."/>
            <person name="Wollam A."/>
            <person name="Shah N."/>
            <person name="Pepin K."/>
            <person name="Bhonagiri V."/>
            <person name="Nash W."/>
            <person name="Johnson M."/>
            <person name="Thiruvilangam P."/>
            <person name="Wilson R."/>
        </authorList>
    </citation>
    <scope>NUCLEOTIDE SEQUENCE [LARGE SCALE GENOMIC DNA]</scope>
    <source>
        <strain>ATCC BAA-1250 / SPB7</strain>
    </source>
</reference>
<comment type="function">
    <text evidence="1">Bifunctional serine/threonine kinase and phosphorylase involved in the regulation of the phosphoenolpyruvate synthase (PEPS) by catalyzing its phosphorylation/dephosphorylation.</text>
</comment>
<comment type="catalytic activity">
    <reaction evidence="1">
        <text>[pyruvate, water dikinase] + ADP = [pyruvate, water dikinase]-phosphate + AMP + H(+)</text>
        <dbReference type="Rhea" id="RHEA:46020"/>
        <dbReference type="Rhea" id="RHEA-COMP:11425"/>
        <dbReference type="Rhea" id="RHEA-COMP:11426"/>
        <dbReference type="ChEBI" id="CHEBI:15378"/>
        <dbReference type="ChEBI" id="CHEBI:43176"/>
        <dbReference type="ChEBI" id="CHEBI:68546"/>
        <dbReference type="ChEBI" id="CHEBI:456215"/>
        <dbReference type="ChEBI" id="CHEBI:456216"/>
        <dbReference type="EC" id="2.7.11.33"/>
    </reaction>
</comment>
<comment type="catalytic activity">
    <reaction evidence="1">
        <text>[pyruvate, water dikinase]-phosphate + phosphate + H(+) = [pyruvate, water dikinase] + diphosphate</text>
        <dbReference type="Rhea" id="RHEA:48580"/>
        <dbReference type="Rhea" id="RHEA-COMP:11425"/>
        <dbReference type="Rhea" id="RHEA-COMP:11426"/>
        <dbReference type="ChEBI" id="CHEBI:15378"/>
        <dbReference type="ChEBI" id="CHEBI:33019"/>
        <dbReference type="ChEBI" id="CHEBI:43176"/>
        <dbReference type="ChEBI" id="CHEBI:43474"/>
        <dbReference type="ChEBI" id="CHEBI:68546"/>
        <dbReference type="EC" id="2.7.4.28"/>
    </reaction>
</comment>
<comment type="similarity">
    <text evidence="1">Belongs to the pyruvate, phosphate/water dikinase regulatory protein family. PSRP subfamily.</text>
</comment>
<proteinExistence type="inferred from homology"/>
<accession>A9N171</accession>
<protein>
    <recommendedName>
        <fullName evidence="1">Phosphoenolpyruvate synthase regulatory protein</fullName>
        <shortName evidence="1">PEP synthase regulatory protein</shortName>
        <shortName evidence="1">PSRP</shortName>
        <ecNumber evidence="1">2.7.11.33</ecNumber>
        <ecNumber evidence="1">2.7.4.28</ecNumber>
    </recommendedName>
    <alternativeName>
        <fullName evidence="1">Pyruvate, water dikinase regulatory protein</fullName>
    </alternativeName>
</protein>
<gene>
    <name evidence="1" type="primary">ppsR</name>
    <name type="ordered locus">SPAB_01987</name>
</gene>
<keyword id="KW-0418">Kinase</keyword>
<keyword id="KW-0547">Nucleotide-binding</keyword>
<keyword id="KW-0723">Serine/threonine-protein kinase</keyword>
<keyword id="KW-0808">Transferase</keyword>